<reference key="1">
    <citation type="submission" date="2007-02" db="EMBL/GenBank/DDBJ databases">
        <authorList>
            <consortium name="NIH - Xenopus Gene Collection (XGC) project"/>
        </authorList>
    </citation>
    <scope>NUCLEOTIDE SEQUENCE [LARGE SCALE MRNA]</scope>
    <source>
        <tissue>Testis</tissue>
    </source>
</reference>
<organism>
    <name type="scientific">Xenopus laevis</name>
    <name type="common">African clawed frog</name>
    <dbReference type="NCBI Taxonomy" id="8355"/>
    <lineage>
        <taxon>Eukaryota</taxon>
        <taxon>Metazoa</taxon>
        <taxon>Chordata</taxon>
        <taxon>Craniata</taxon>
        <taxon>Vertebrata</taxon>
        <taxon>Euteleostomi</taxon>
        <taxon>Amphibia</taxon>
        <taxon>Batrachia</taxon>
        <taxon>Anura</taxon>
        <taxon>Pipoidea</taxon>
        <taxon>Pipidae</taxon>
        <taxon>Xenopodinae</taxon>
        <taxon>Xenopus</taxon>
        <taxon>Xenopus</taxon>
    </lineage>
</organism>
<evidence type="ECO:0000255" key="1"/>
<evidence type="ECO:0000305" key="2"/>
<proteinExistence type="evidence at transcript level"/>
<accession>Q3KPZ2</accession>
<accession>A2RV90</accession>
<accession>Q0P3S7</accession>
<name>CC42L_XENLA</name>
<protein>
    <recommendedName>
        <fullName evidence="2">Coiled-coil domain-containing protein 42-like 1</fullName>
    </recommendedName>
</protein>
<feature type="chain" id="PRO_0000343714" description="Coiled-coil domain-containing protein 42-like 1">
    <location>
        <begin position="1"/>
        <end position="321"/>
    </location>
</feature>
<feature type="coiled-coil region" evidence="1">
    <location>
        <begin position="36"/>
        <end position="144"/>
    </location>
</feature>
<feature type="coiled-coil region" evidence="1">
    <location>
        <begin position="202"/>
        <end position="229"/>
    </location>
</feature>
<feature type="sequence conflict" description="In Ref. 1; AAI33232." evidence="2" ref="1">
    <original>A</original>
    <variation>S</variation>
    <location>
        <position position="249"/>
    </location>
</feature>
<feature type="sequence conflict" description="In Ref. 1; AAI33232." evidence="2" ref="1">
    <original>S</original>
    <variation>N</variation>
    <location>
        <position position="265"/>
    </location>
</feature>
<feature type="sequence conflict" description="In Ref. 1; AAI22482." evidence="2" ref="1">
    <original>R</original>
    <variation>H</variation>
    <location>
        <position position="305"/>
    </location>
</feature>
<comment type="similarity">
    <text evidence="2">Belongs to the CFAP73 family.</text>
</comment>
<comment type="sequence caution" evidence="2">
    <conflict type="erroneous initiation">
        <sequence resource="EMBL-CDS" id="AAI06469"/>
    </conflict>
</comment>
<comment type="sequence caution" evidence="2">
    <conflict type="erroneous initiation">
        <sequence resource="EMBL-CDS" id="AAI22482"/>
    </conflict>
</comment>
<comment type="sequence caution" evidence="2">
    <conflict type="erroneous initiation">
        <sequence resource="EMBL-CDS" id="AAI33232"/>
    </conflict>
</comment>
<sequence length="321" mass="38183">MDQAEYFHSWCRQDEMMLNLLEKCPTQQIQRLPLPIRRLEKKQEIQKMLEARREDYHKAMEGVAREWEKLQEKEAEIRVGLEKYKKSIVKNDKKQERAFRDAAKARSMCIQYDLQLKALQEQCEELDKKRAKTKAQVQKYEKCHRYLEKVVKASEKFQSIPELMSQFHALVSYLPQEEQEEQKSQESRSQRIHCMEEKSDSIVQFSNEIHRLYIRLEKAKKKRREWELRWNQMLKTATRKNLLLGTIKAAVRDIFQTVISQGLGSNSVGEDDIVEQLEIIRKDIEDLTDIWEKLSLNEELMEPIRAPLLPTDKTLGHPPSQ</sequence>
<keyword id="KW-0175">Coiled coil</keyword>
<keyword id="KW-1185">Reference proteome</keyword>
<dbReference type="EMBL" id="BC106468">
    <property type="protein sequence ID" value="AAI06469.1"/>
    <property type="status" value="ALT_INIT"/>
    <property type="molecule type" value="mRNA"/>
</dbReference>
<dbReference type="EMBL" id="BC122481">
    <property type="protein sequence ID" value="AAI22482.1"/>
    <property type="status" value="ALT_INIT"/>
    <property type="molecule type" value="mRNA"/>
</dbReference>
<dbReference type="EMBL" id="BC133231">
    <property type="protein sequence ID" value="AAI33232.1"/>
    <property type="status" value="ALT_INIT"/>
    <property type="molecule type" value="mRNA"/>
</dbReference>
<dbReference type="SMR" id="Q3KPZ2"/>
<dbReference type="AGR" id="Xenbase:XB-GENE-6253259"/>
<dbReference type="Xenbase" id="XB-GENE-6253259">
    <property type="gene designation" value="ccdc42.L"/>
</dbReference>
<dbReference type="Proteomes" id="UP000186698">
    <property type="component" value="Unplaced"/>
</dbReference>
<dbReference type="GO" id="GO:0005856">
    <property type="term" value="C:cytoskeleton"/>
    <property type="evidence" value="ECO:0007669"/>
    <property type="project" value="UniProtKB-ARBA"/>
</dbReference>
<dbReference type="InterPro" id="IPR051147">
    <property type="entry name" value="CFAP_domain-containing"/>
</dbReference>
<dbReference type="InterPro" id="IPR025252">
    <property type="entry name" value="DUF4200"/>
</dbReference>
<dbReference type="PANTHER" id="PTHR21683">
    <property type="entry name" value="COILED-COIL DOMAIN-CONTAINING PROTEIN 42 LIKE-2-LIKE-RELATED"/>
    <property type="match status" value="1"/>
</dbReference>
<dbReference type="PANTHER" id="PTHR21683:SF14">
    <property type="entry name" value="COILED-COIL DOMAIN-CONTAINING PROTEIN 42-LIKE 1"/>
    <property type="match status" value="1"/>
</dbReference>
<dbReference type="Pfam" id="PF13863">
    <property type="entry name" value="DUF4200"/>
    <property type="match status" value="1"/>
</dbReference>